<sequence>MDAFKGGMSLERLPEGLRPPPPPPHDMGPSFHLARTADPREPLENSASESSDADLPDKERGGEAKVPEDGGAGSAGCGSAEDPAKKKKQRRQRTHFTSQQLQELEATFQRNRYPDMSMREEIAVWTNLTEPRVRVWFKNRRAKWRKRERNQQLDLCKGGYVPQFSGLVQPYEDVYAAAGYSYNNWAAKSLAPAPLSTKSFTFFNSMSPLSSQSMFSAPSSISSMTMPSSMGPGSVPGMPNSGLNNINNLTGSSLNSAMSPGACPYGTPASPYSVYRDTCNSSLASLRLKSKQHSSFGYGGLQGPASGLNACQYNS</sequence>
<name>PITX1_RAT</name>
<accession>Q99NA7</accession>
<reference key="1">
    <citation type="journal article" date="2001" name="Endocrinology">
        <title>Characterization of 5'-flanking region of rat somatostatin receptor sst2 gene: transcriptional regulatory elements and activation by Pitx1 and estrogen.</title>
        <authorList>
            <person name="Kimura N."/>
            <person name="Tomizawa S."/>
            <person name="Arai K.N."/>
            <person name="Osamura R.Y."/>
            <person name="Kimura N."/>
        </authorList>
    </citation>
    <scope>NUCLEOTIDE SEQUENCE [MRNA]</scope>
    <source>
        <strain>Sprague-Dawley</strain>
        <tissue>Pituitary</tissue>
    </source>
</reference>
<reference key="2">
    <citation type="journal article" date="2004" name="Genome Res.">
        <title>The status, quality, and expansion of the NIH full-length cDNA project: the Mammalian Gene Collection (MGC).</title>
        <authorList>
            <consortium name="The MGC Project Team"/>
        </authorList>
    </citation>
    <scope>NUCLEOTIDE SEQUENCE [LARGE SCALE MRNA]</scope>
    <source>
        <tissue>Prostate</tissue>
    </source>
</reference>
<protein>
    <recommendedName>
        <fullName>Pituitary homeobox 1</fullName>
    </recommendedName>
    <alternativeName>
        <fullName>Homeobox protein PITX1</fullName>
    </alternativeName>
    <alternativeName>
        <fullName>Paired-like homeodomain transcription factor 1</fullName>
    </alternativeName>
</protein>
<feature type="chain" id="PRO_0000049220" description="Pituitary homeobox 1">
    <location>
        <begin position="1"/>
        <end position="315"/>
    </location>
</feature>
<feature type="DNA-binding region" description="Homeobox" evidence="5">
    <location>
        <begin position="89"/>
        <end position="148"/>
    </location>
</feature>
<feature type="region of interest" description="Disordered" evidence="7">
    <location>
        <begin position="1"/>
        <end position="103"/>
    </location>
</feature>
<feature type="region of interest" description="Interaction with PIT-1" evidence="1">
    <location>
        <begin position="149"/>
        <end position="280"/>
    </location>
</feature>
<feature type="short sequence motif" description="OAR" evidence="6">
    <location>
        <begin position="281"/>
        <end position="294"/>
    </location>
</feature>
<feature type="short sequence motif" description="Nuclear localization signal" evidence="4">
    <location>
        <begin position="287"/>
        <end position="291"/>
    </location>
</feature>
<feature type="compositionally biased region" description="Pro residues" evidence="7">
    <location>
        <begin position="17"/>
        <end position="26"/>
    </location>
</feature>
<feature type="compositionally biased region" description="Basic and acidic residues" evidence="7">
    <location>
        <begin position="55"/>
        <end position="68"/>
    </location>
</feature>
<feature type="compositionally biased region" description="Basic residues" evidence="7">
    <location>
        <begin position="85"/>
        <end position="94"/>
    </location>
</feature>
<feature type="modified residue" description="N-acetylmethionine" evidence="3">
    <location>
        <position position="1"/>
    </location>
</feature>
<feature type="modified residue" description="Phosphoserine" evidence="3">
    <location>
        <position position="46"/>
    </location>
</feature>
<feature type="modified residue" description="Phosphoserine" evidence="3">
    <location>
        <position position="48"/>
    </location>
</feature>
<evidence type="ECO:0000250" key="1"/>
<evidence type="ECO:0000250" key="2">
    <source>
        <dbReference type="UniProtKB" id="P56673"/>
    </source>
</evidence>
<evidence type="ECO:0000250" key="3">
    <source>
        <dbReference type="UniProtKB" id="P78337"/>
    </source>
</evidence>
<evidence type="ECO:0000255" key="4"/>
<evidence type="ECO:0000255" key="5">
    <source>
        <dbReference type="PROSITE-ProRule" id="PRU00108"/>
    </source>
</evidence>
<evidence type="ECO:0000255" key="6">
    <source>
        <dbReference type="PROSITE-ProRule" id="PRU00138"/>
    </source>
</evidence>
<evidence type="ECO:0000256" key="7">
    <source>
        <dbReference type="SAM" id="MobiDB-lite"/>
    </source>
</evidence>
<evidence type="ECO:0000305" key="8"/>
<gene>
    <name type="primary">Pitx1</name>
    <name type="synonym">Ptx1</name>
</gene>
<dbReference type="EMBL" id="AB047298">
    <property type="protein sequence ID" value="BAB41202.1"/>
    <property type="molecule type" value="mRNA"/>
</dbReference>
<dbReference type="EMBL" id="BC061966">
    <property type="protein sequence ID" value="AAH61966.1"/>
    <property type="molecule type" value="mRNA"/>
</dbReference>
<dbReference type="RefSeq" id="NP_446076.1">
    <property type="nucleotide sequence ID" value="NM_053624.2"/>
</dbReference>
<dbReference type="RefSeq" id="XP_006253631.1">
    <property type="nucleotide sequence ID" value="XM_006253569.3"/>
</dbReference>
<dbReference type="RefSeq" id="XP_063132085.1">
    <property type="nucleotide sequence ID" value="XM_063276015.1"/>
</dbReference>
<dbReference type="RefSeq" id="XP_063132086.1">
    <property type="nucleotide sequence ID" value="XM_063276016.1"/>
</dbReference>
<dbReference type="SMR" id="Q99NA7"/>
<dbReference type="FunCoup" id="Q99NA7">
    <property type="interactions" value="32"/>
</dbReference>
<dbReference type="STRING" id="10116.ENSRNOP00000015307"/>
<dbReference type="GlyGen" id="Q99NA7">
    <property type="glycosylation" value="1 site"/>
</dbReference>
<dbReference type="iPTMnet" id="Q99NA7"/>
<dbReference type="PhosphoSitePlus" id="Q99NA7"/>
<dbReference type="PaxDb" id="10116-ENSRNOP00000015307"/>
<dbReference type="Ensembl" id="ENSRNOT00000015307.7">
    <property type="protein sequence ID" value="ENSRNOP00000015307.4"/>
    <property type="gene ID" value="ENSRNOG00000011423.7"/>
</dbReference>
<dbReference type="GeneID" id="113983"/>
<dbReference type="KEGG" id="rno:113983"/>
<dbReference type="UCSC" id="RGD:69253">
    <property type="organism name" value="rat"/>
</dbReference>
<dbReference type="AGR" id="RGD:69253"/>
<dbReference type="CTD" id="5307"/>
<dbReference type="RGD" id="69253">
    <property type="gene designation" value="Pitx1"/>
</dbReference>
<dbReference type="eggNOG" id="KOG0486">
    <property type="taxonomic scope" value="Eukaryota"/>
</dbReference>
<dbReference type="GeneTree" id="ENSGT00940000154518"/>
<dbReference type="HOGENOM" id="CLU_030301_0_0_1"/>
<dbReference type="InParanoid" id="Q99NA7"/>
<dbReference type="OMA" id="YVDLGGM"/>
<dbReference type="OrthoDB" id="6159439at2759"/>
<dbReference type="PhylomeDB" id="Q99NA7"/>
<dbReference type="TreeFam" id="TF351940"/>
<dbReference type="PRO" id="PR:Q99NA7"/>
<dbReference type="Proteomes" id="UP000002494">
    <property type="component" value="Chromosome 17"/>
</dbReference>
<dbReference type="Bgee" id="ENSRNOG00000011423">
    <property type="expression patterns" value="Expressed in esophagus and 7 other cell types or tissues"/>
</dbReference>
<dbReference type="GO" id="GO:0005737">
    <property type="term" value="C:cytoplasm"/>
    <property type="evidence" value="ECO:0000266"/>
    <property type="project" value="RGD"/>
</dbReference>
<dbReference type="GO" id="GO:0005634">
    <property type="term" value="C:nucleus"/>
    <property type="evidence" value="ECO:0000250"/>
    <property type="project" value="UniProtKB"/>
</dbReference>
<dbReference type="GO" id="GO:0005667">
    <property type="term" value="C:transcription regulator complex"/>
    <property type="evidence" value="ECO:0000266"/>
    <property type="project" value="RGD"/>
</dbReference>
<dbReference type="GO" id="GO:0001228">
    <property type="term" value="F:DNA-binding transcription activator activity, RNA polymerase II-specific"/>
    <property type="evidence" value="ECO:0000266"/>
    <property type="project" value="RGD"/>
</dbReference>
<dbReference type="GO" id="GO:0003700">
    <property type="term" value="F:DNA-binding transcription factor activity"/>
    <property type="evidence" value="ECO:0000315"/>
    <property type="project" value="RGD"/>
</dbReference>
<dbReference type="GO" id="GO:0000981">
    <property type="term" value="F:DNA-binding transcription factor activity, RNA polymerase II-specific"/>
    <property type="evidence" value="ECO:0000318"/>
    <property type="project" value="GO_Central"/>
</dbReference>
<dbReference type="GO" id="GO:0000978">
    <property type="term" value="F:RNA polymerase II cis-regulatory region sequence-specific DNA binding"/>
    <property type="evidence" value="ECO:0000266"/>
    <property type="project" value="RGD"/>
</dbReference>
<dbReference type="GO" id="GO:0061629">
    <property type="term" value="F:RNA polymerase II-specific DNA-binding transcription factor binding"/>
    <property type="evidence" value="ECO:0000266"/>
    <property type="project" value="RGD"/>
</dbReference>
<dbReference type="GO" id="GO:1990837">
    <property type="term" value="F:sequence-specific double-stranded DNA binding"/>
    <property type="evidence" value="ECO:0000266"/>
    <property type="project" value="RGD"/>
</dbReference>
<dbReference type="GO" id="GO:0009653">
    <property type="term" value="P:anatomical structure morphogenesis"/>
    <property type="evidence" value="ECO:0000318"/>
    <property type="project" value="GO_Central"/>
</dbReference>
<dbReference type="GO" id="GO:0014707">
    <property type="term" value="P:branchiomeric skeletal muscle development"/>
    <property type="evidence" value="ECO:0000266"/>
    <property type="project" value="RGD"/>
</dbReference>
<dbReference type="GO" id="GO:0051216">
    <property type="term" value="P:cartilage development"/>
    <property type="evidence" value="ECO:0000266"/>
    <property type="project" value="RGD"/>
</dbReference>
<dbReference type="GO" id="GO:0035116">
    <property type="term" value="P:embryonic hindlimb morphogenesis"/>
    <property type="evidence" value="ECO:0000266"/>
    <property type="project" value="RGD"/>
</dbReference>
<dbReference type="GO" id="GO:0035137">
    <property type="term" value="P:hindlimb morphogenesis"/>
    <property type="evidence" value="ECO:0000266"/>
    <property type="project" value="RGD"/>
</dbReference>
<dbReference type="GO" id="GO:0048625">
    <property type="term" value="P:myoblast fate commitment"/>
    <property type="evidence" value="ECO:0000266"/>
    <property type="project" value="RGD"/>
</dbReference>
<dbReference type="GO" id="GO:0045892">
    <property type="term" value="P:negative regulation of DNA-templated transcription"/>
    <property type="evidence" value="ECO:0000266"/>
    <property type="project" value="RGD"/>
</dbReference>
<dbReference type="GO" id="GO:0021983">
    <property type="term" value="P:pituitary gland development"/>
    <property type="evidence" value="ECO:0000266"/>
    <property type="project" value="RGD"/>
</dbReference>
<dbReference type="GO" id="GO:0045944">
    <property type="term" value="P:positive regulation of transcription by RNA polymerase II"/>
    <property type="evidence" value="ECO:0000266"/>
    <property type="project" value="RGD"/>
</dbReference>
<dbReference type="GO" id="GO:0006355">
    <property type="term" value="P:regulation of DNA-templated transcription"/>
    <property type="evidence" value="ECO:0000315"/>
    <property type="project" value="RGD"/>
</dbReference>
<dbReference type="GO" id="GO:0006357">
    <property type="term" value="P:regulation of transcription by RNA polymerase II"/>
    <property type="evidence" value="ECO:0000318"/>
    <property type="project" value="GO_Central"/>
</dbReference>
<dbReference type="GO" id="GO:0001501">
    <property type="term" value="P:skeletal system development"/>
    <property type="evidence" value="ECO:0000266"/>
    <property type="project" value="RGD"/>
</dbReference>
<dbReference type="CDD" id="cd00086">
    <property type="entry name" value="homeodomain"/>
    <property type="match status" value="1"/>
</dbReference>
<dbReference type="FunFam" id="1.10.10.60:FF:000031">
    <property type="entry name" value="Homeobox protein"/>
    <property type="match status" value="1"/>
</dbReference>
<dbReference type="Gene3D" id="1.10.10.60">
    <property type="entry name" value="Homeodomain-like"/>
    <property type="match status" value="1"/>
</dbReference>
<dbReference type="InterPro" id="IPR001356">
    <property type="entry name" value="HD"/>
</dbReference>
<dbReference type="InterPro" id="IPR017970">
    <property type="entry name" value="Homeobox_CS"/>
</dbReference>
<dbReference type="InterPro" id="IPR016233">
    <property type="entry name" value="Homeobox_Pitx/unc30"/>
</dbReference>
<dbReference type="InterPro" id="IPR009057">
    <property type="entry name" value="Homeodomain-like_sf"/>
</dbReference>
<dbReference type="InterPro" id="IPR003654">
    <property type="entry name" value="OAR_dom"/>
</dbReference>
<dbReference type="PANTHER" id="PTHR45882:SF1">
    <property type="entry name" value="PITUITARY HOMEOBOX 1"/>
    <property type="match status" value="1"/>
</dbReference>
<dbReference type="PANTHER" id="PTHR45882">
    <property type="entry name" value="PITUITARY HOMEOBOX HOMOLOG PTX1"/>
    <property type="match status" value="1"/>
</dbReference>
<dbReference type="Pfam" id="PF00046">
    <property type="entry name" value="Homeodomain"/>
    <property type="match status" value="1"/>
</dbReference>
<dbReference type="Pfam" id="PF03826">
    <property type="entry name" value="OAR"/>
    <property type="match status" value="1"/>
</dbReference>
<dbReference type="PIRSF" id="PIRSF000563">
    <property type="entry name" value="Homeobox_protein_Pitx/Unc30"/>
    <property type="match status" value="1"/>
</dbReference>
<dbReference type="SMART" id="SM00389">
    <property type="entry name" value="HOX"/>
    <property type="match status" value="1"/>
</dbReference>
<dbReference type="SUPFAM" id="SSF46689">
    <property type="entry name" value="Homeodomain-like"/>
    <property type="match status" value="1"/>
</dbReference>
<dbReference type="PROSITE" id="PS00027">
    <property type="entry name" value="HOMEOBOX_1"/>
    <property type="match status" value="1"/>
</dbReference>
<dbReference type="PROSITE" id="PS50071">
    <property type="entry name" value="HOMEOBOX_2"/>
    <property type="match status" value="1"/>
</dbReference>
<dbReference type="PROSITE" id="PS50803">
    <property type="entry name" value="OAR"/>
    <property type="match status" value="1"/>
</dbReference>
<comment type="function">
    <text evidence="3">Sequence-specific transcription factor that binds gene promoters and activates their transcription. May play a role in the development of anterior structures, and in particular, the brain and facies and in specifying the identity or structure of hindlimb.</text>
</comment>
<comment type="subunit">
    <text evidence="2">Interacts with POU1F1.</text>
</comment>
<comment type="subcellular location">
    <subcellularLocation>
        <location>Nucleus</location>
    </subcellularLocation>
</comment>
<comment type="similarity">
    <text evidence="8">Belongs to the paired homeobox family. Bicoid subfamily.</text>
</comment>
<organism>
    <name type="scientific">Rattus norvegicus</name>
    <name type="common">Rat</name>
    <dbReference type="NCBI Taxonomy" id="10116"/>
    <lineage>
        <taxon>Eukaryota</taxon>
        <taxon>Metazoa</taxon>
        <taxon>Chordata</taxon>
        <taxon>Craniata</taxon>
        <taxon>Vertebrata</taxon>
        <taxon>Euteleostomi</taxon>
        <taxon>Mammalia</taxon>
        <taxon>Eutheria</taxon>
        <taxon>Euarchontoglires</taxon>
        <taxon>Glires</taxon>
        <taxon>Rodentia</taxon>
        <taxon>Myomorpha</taxon>
        <taxon>Muroidea</taxon>
        <taxon>Muridae</taxon>
        <taxon>Murinae</taxon>
        <taxon>Rattus</taxon>
    </lineage>
</organism>
<proteinExistence type="evidence at transcript level"/>
<keyword id="KW-0007">Acetylation</keyword>
<keyword id="KW-0010">Activator</keyword>
<keyword id="KW-0217">Developmental protein</keyword>
<keyword id="KW-0238">DNA-binding</keyword>
<keyword id="KW-0371">Homeobox</keyword>
<keyword id="KW-0539">Nucleus</keyword>
<keyword id="KW-0597">Phosphoprotein</keyword>
<keyword id="KW-1185">Reference proteome</keyword>
<keyword id="KW-0804">Transcription</keyword>
<keyword id="KW-0805">Transcription regulation</keyword>